<accession>Q8X1T8</accession>
<comment type="function">
    <text evidence="4 6">Aerial growth, conidiation, and dispersal of filamentous fungi in the environment rely upon a capability of their secreting small amphipathic proteins called hydrophobins (HPBs) with low sequence identity. Class I can self-assemble into an outermost layer of rodlet bundles on aerial cell surfaces, conferring cellular hydrophobicity that supports fungal growth, development and dispersal; whereas Class II form highly ordered films at water-air interfaces through intermolecular interactions but contribute nothing to the rodlet structure (Probable). Pnh2 is a class I hydrophobin that might be involved in the attachment of the hydrophilic wall of hyphae to the hydrophobic surface of wood under inorganic phosphate (Pi)-deficient conditions and enable the mycelium to degrade efficiently the components of wood and to acquire nutrients containing Pi (PubMed:14608471).</text>
</comment>
<comment type="subunit">
    <text evidence="1">Self-assembles to form functional amyloid fibrils called rodlets. Self-assembly into fibrillar rodlets occurs spontaneously at hydrophobic:hydrophilic interfaces and the rodlets further associate laterally to form amphipathic monolayers.</text>
</comment>
<comment type="subcellular location">
    <subcellularLocation>
        <location evidence="1">Secreted</location>
    </subcellularLocation>
    <subcellularLocation>
        <location evidence="1">Secreted</location>
        <location evidence="1">Cell wall</location>
    </subcellularLocation>
</comment>
<comment type="induction">
    <text evidence="4">Expression is induced under conditions of inorganic phosphate (Pi) deficiency.</text>
</comment>
<comment type="similarity">
    <text evidence="6">Belongs to the fungal hydrophobin family.</text>
</comment>
<proteinExistence type="evidence at transcript level"/>
<gene>
    <name evidence="5" type="primary">pnh2</name>
    <name evidence="5" type="synonym">pdi263</name>
</gene>
<dbReference type="EMBL" id="AB079129">
    <property type="protein sequence ID" value="BAB84546.1"/>
    <property type="molecule type" value="mRNA"/>
</dbReference>
<dbReference type="GO" id="GO:0005576">
    <property type="term" value="C:extracellular region"/>
    <property type="evidence" value="ECO:0007669"/>
    <property type="project" value="UniProtKB-KW"/>
</dbReference>
<dbReference type="GO" id="GO:0009277">
    <property type="term" value="C:fungal-type cell wall"/>
    <property type="evidence" value="ECO:0007669"/>
    <property type="project" value="InterPro"/>
</dbReference>
<dbReference type="GO" id="GO:0005199">
    <property type="term" value="F:structural constituent of cell wall"/>
    <property type="evidence" value="ECO:0007669"/>
    <property type="project" value="InterPro"/>
</dbReference>
<dbReference type="CDD" id="cd23507">
    <property type="entry name" value="hydrophobin_I"/>
    <property type="match status" value="1"/>
</dbReference>
<dbReference type="InterPro" id="IPR001338">
    <property type="entry name" value="Hydrophobin"/>
</dbReference>
<dbReference type="Pfam" id="PF01185">
    <property type="entry name" value="Hydrophobin"/>
    <property type="match status" value="1"/>
</dbReference>
<dbReference type="SMART" id="SM00075">
    <property type="entry name" value="HYDRO"/>
    <property type="match status" value="1"/>
</dbReference>
<name>PNH2_PHONA</name>
<keyword id="KW-0134">Cell wall</keyword>
<keyword id="KW-1015">Disulfide bond</keyword>
<keyword id="KW-0964">Secreted</keyword>
<keyword id="KW-0732">Signal</keyword>
<evidence type="ECO:0000250" key="1">
    <source>
        <dbReference type="UniProtKB" id="P16933"/>
    </source>
</evidence>
<evidence type="ECO:0000250" key="2">
    <source>
        <dbReference type="UniProtKB" id="Q04571"/>
    </source>
</evidence>
<evidence type="ECO:0000255" key="3"/>
<evidence type="ECO:0000269" key="4">
    <source>
    </source>
</evidence>
<evidence type="ECO:0000303" key="5">
    <source>
    </source>
</evidence>
<evidence type="ECO:0000305" key="6"/>
<reference key="1">
    <citation type="journal article" date="2004" name="Curr. Genet.">
        <title>Three genes specifically expressed during phosphate deficiency in Pholiota nameko strain N2 encode hydrophobins.</title>
        <authorList>
            <person name="Tasaki Y."/>
            <person name="Ohata K."/>
            <person name="Hara T."/>
            <person name="Joh T."/>
        </authorList>
    </citation>
    <scope>NUCLEOTIDE SEQUENCE [MRNA]</scope>
    <scope>FUNCTION</scope>
    <scope>INDUCTION</scope>
    <source>
        <strain>N2</strain>
    </source>
</reference>
<protein>
    <recommendedName>
        <fullName evidence="5">Class I hydrophobin 2</fullName>
    </recommendedName>
    <alternativeName>
        <fullName evidence="5">Inorganic phosphate deficiency-inducible protein 263</fullName>
    </alternativeName>
</protein>
<organism>
    <name type="scientific">Pholiota nameko</name>
    <dbReference type="NCBI Taxonomy" id="61267"/>
    <lineage>
        <taxon>Eukaryota</taxon>
        <taxon>Fungi</taxon>
        <taxon>Dikarya</taxon>
        <taxon>Basidiomycota</taxon>
        <taxon>Agaricomycotina</taxon>
        <taxon>Agaricomycetes</taxon>
        <taxon>Agaricomycetidae</taxon>
        <taxon>Agaricales</taxon>
        <taxon>Agaricineae</taxon>
        <taxon>Strophariaceae</taxon>
        <taxon>Pholiota</taxon>
    </lineage>
</organism>
<sequence length="110" mass="10892">MFARAASVFVLSLPILATANVLPRQDNQCNTGSLQCCSSVQSSSSSLVAILLGLLGVAAGGLTGQVGVTCSPITVIGVSGTSCSEQPVCCTGNTFNGVIATGCTPVNVNL</sequence>
<feature type="signal peptide" evidence="3">
    <location>
        <begin position="1"/>
        <end position="19"/>
    </location>
</feature>
<feature type="chain" id="PRO_5013984649" description="Class I hydrophobin 2">
    <location>
        <begin position="20"/>
        <end position="110"/>
    </location>
</feature>
<feature type="disulfide bond" evidence="2">
    <location>
        <begin position="29"/>
        <end position="89"/>
    </location>
</feature>
<feature type="disulfide bond" evidence="2">
    <location>
        <begin position="36"/>
        <end position="83"/>
    </location>
</feature>
<feature type="disulfide bond" evidence="2">
    <location>
        <begin position="37"/>
        <end position="70"/>
    </location>
</feature>
<feature type="disulfide bond" evidence="2">
    <location>
        <begin position="90"/>
        <end position="103"/>
    </location>
</feature>